<keyword id="KW-1185">Reference proteome</keyword>
<keyword id="KW-0687">Ribonucleoprotein</keyword>
<keyword id="KW-0689">Ribosomal protein</keyword>
<keyword id="KW-0694">RNA-binding</keyword>
<keyword id="KW-0699">rRNA-binding</keyword>
<accession>B0C2C8</accession>
<evidence type="ECO:0000255" key="1">
    <source>
        <dbReference type="HAMAP-Rule" id="MF_00500"/>
    </source>
</evidence>
<evidence type="ECO:0000305" key="2"/>
<comment type="function">
    <text evidence="1">Binds directly to 16S ribosomal RNA.</text>
</comment>
<comment type="similarity">
    <text evidence="1">Belongs to the bacterial ribosomal protein bS20 family.</text>
</comment>
<reference key="1">
    <citation type="journal article" date="2008" name="Proc. Natl. Acad. Sci. U.S.A.">
        <title>Niche adaptation and genome expansion in the chlorophyll d-producing cyanobacterium Acaryochloris marina.</title>
        <authorList>
            <person name="Swingley W.D."/>
            <person name="Chen M."/>
            <person name="Cheung P.C."/>
            <person name="Conrad A.L."/>
            <person name="Dejesa L.C."/>
            <person name="Hao J."/>
            <person name="Honchak B.M."/>
            <person name="Karbach L.E."/>
            <person name="Kurdoglu A."/>
            <person name="Lahiri S."/>
            <person name="Mastrian S.D."/>
            <person name="Miyashita H."/>
            <person name="Page L."/>
            <person name="Ramakrishna P."/>
            <person name="Satoh S."/>
            <person name="Sattley W.M."/>
            <person name="Shimada Y."/>
            <person name="Taylor H.L."/>
            <person name="Tomo T."/>
            <person name="Tsuchiya T."/>
            <person name="Wang Z.T."/>
            <person name="Raymond J."/>
            <person name="Mimuro M."/>
            <person name="Blankenship R.E."/>
            <person name="Touchman J.W."/>
        </authorList>
    </citation>
    <scope>NUCLEOTIDE SEQUENCE [LARGE SCALE GENOMIC DNA]</scope>
    <source>
        <strain>MBIC 11017</strain>
    </source>
</reference>
<sequence length="94" mass="10483">MANIKSAKKRILIAERNRLQNKAYKSAIKTFTKRFQAAVDDYKSNPSDDQLAAIQNEMSVTYSKIDKAVKVGVFHRNTGARKKAGLARILKAAT</sequence>
<feature type="chain" id="PRO_1000081412" description="Small ribosomal subunit protein bS20">
    <location>
        <begin position="1"/>
        <end position="94"/>
    </location>
</feature>
<dbReference type="EMBL" id="CP000828">
    <property type="protein sequence ID" value="ABW28580.1"/>
    <property type="molecule type" value="Genomic_DNA"/>
</dbReference>
<dbReference type="RefSeq" id="WP_012163973.1">
    <property type="nucleotide sequence ID" value="NC_009925.1"/>
</dbReference>
<dbReference type="SMR" id="B0C2C8"/>
<dbReference type="STRING" id="329726.AM1_3590"/>
<dbReference type="KEGG" id="amr:AM1_3590"/>
<dbReference type="eggNOG" id="COG0268">
    <property type="taxonomic scope" value="Bacteria"/>
</dbReference>
<dbReference type="HOGENOM" id="CLU_160655_5_0_3"/>
<dbReference type="OrthoDB" id="9808392at2"/>
<dbReference type="Proteomes" id="UP000000268">
    <property type="component" value="Chromosome"/>
</dbReference>
<dbReference type="GO" id="GO:0005829">
    <property type="term" value="C:cytosol"/>
    <property type="evidence" value="ECO:0007669"/>
    <property type="project" value="TreeGrafter"/>
</dbReference>
<dbReference type="GO" id="GO:0015935">
    <property type="term" value="C:small ribosomal subunit"/>
    <property type="evidence" value="ECO:0007669"/>
    <property type="project" value="TreeGrafter"/>
</dbReference>
<dbReference type="GO" id="GO:0070181">
    <property type="term" value="F:small ribosomal subunit rRNA binding"/>
    <property type="evidence" value="ECO:0007669"/>
    <property type="project" value="TreeGrafter"/>
</dbReference>
<dbReference type="GO" id="GO:0003735">
    <property type="term" value="F:structural constituent of ribosome"/>
    <property type="evidence" value="ECO:0007669"/>
    <property type="project" value="InterPro"/>
</dbReference>
<dbReference type="GO" id="GO:0006412">
    <property type="term" value="P:translation"/>
    <property type="evidence" value="ECO:0007669"/>
    <property type="project" value="UniProtKB-UniRule"/>
</dbReference>
<dbReference type="FunFam" id="1.20.58.110:FF:000001">
    <property type="entry name" value="30S ribosomal protein S20"/>
    <property type="match status" value="1"/>
</dbReference>
<dbReference type="Gene3D" id="1.20.58.110">
    <property type="entry name" value="Ribosomal protein S20"/>
    <property type="match status" value="1"/>
</dbReference>
<dbReference type="HAMAP" id="MF_00500">
    <property type="entry name" value="Ribosomal_bS20"/>
    <property type="match status" value="1"/>
</dbReference>
<dbReference type="InterPro" id="IPR002583">
    <property type="entry name" value="Ribosomal_bS20"/>
</dbReference>
<dbReference type="InterPro" id="IPR036510">
    <property type="entry name" value="Ribosomal_bS20_sf"/>
</dbReference>
<dbReference type="NCBIfam" id="TIGR00029">
    <property type="entry name" value="S20"/>
    <property type="match status" value="1"/>
</dbReference>
<dbReference type="PANTHER" id="PTHR33398">
    <property type="entry name" value="30S RIBOSOMAL PROTEIN S20"/>
    <property type="match status" value="1"/>
</dbReference>
<dbReference type="PANTHER" id="PTHR33398:SF1">
    <property type="entry name" value="SMALL RIBOSOMAL SUBUNIT PROTEIN BS20C"/>
    <property type="match status" value="1"/>
</dbReference>
<dbReference type="Pfam" id="PF01649">
    <property type="entry name" value="Ribosomal_S20p"/>
    <property type="match status" value="1"/>
</dbReference>
<dbReference type="SUPFAM" id="SSF46992">
    <property type="entry name" value="Ribosomal protein S20"/>
    <property type="match status" value="1"/>
</dbReference>
<gene>
    <name evidence="1" type="primary">rpsT</name>
    <name evidence="1" type="synonym">rps20</name>
    <name type="ordered locus">AM1_3590</name>
</gene>
<protein>
    <recommendedName>
        <fullName evidence="1">Small ribosomal subunit protein bS20</fullName>
    </recommendedName>
    <alternativeName>
        <fullName evidence="2">30S ribosomal protein S20</fullName>
    </alternativeName>
</protein>
<organism>
    <name type="scientific">Acaryochloris marina (strain MBIC 11017)</name>
    <dbReference type="NCBI Taxonomy" id="329726"/>
    <lineage>
        <taxon>Bacteria</taxon>
        <taxon>Bacillati</taxon>
        <taxon>Cyanobacteriota</taxon>
        <taxon>Cyanophyceae</taxon>
        <taxon>Acaryochloridales</taxon>
        <taxon>Acaryochloridaceae</taxon>
        <taxon>Acaryochloris</taxon>
    </lineage>
</organism>
<name>RS20_ACAM1</name>
<proteinExistence type="inferred from homology"/>